<accession>P38374</accession>
<accession>D6VQF8</accession>
<feature type="chain" id="PRO_0000066513" description="Protein YSY6">
    <location>
        <begin position="1"/>
        <end position="65"/>
    </location>
</feature>
<feature type="transmembrane region" description="Helical" evidence="2">
    <location>
        <begin position="45"/>
        <end position="65"/>
    </location>
</feature>
<gene>
    <name type="primary">YSY6</name>
    <name type="ordered locus">YBR162W-A</name>
    <name type="ORF">YBR162BW</name>
</gene>
<name>YSY6_YEAST</name>
<evidence type="ECO:0000250" key="1">
    <source>
        <dbReference type="UniProtKB" id="Q9R2C1"/>
    </source>
</evidence>
<evidence type="ECO:0000255" key="2"/>
<evidence type="ECO:0000269" key="3">
    <source>
    </source>
</evidence>
<evidence type="ECO:0000305" key="4"/>
<comment type="function">
    <text evidence="1">Interacts with target proteins during their translocation into the lumen of the endoplasmic reticulum. Protects unfolded target proteins against degradation during ER stress. May facilitate glycosylation of target proteins after termination of ER stress.</text>
</comment>
<comment type="subcellular location">
    <subcellularLocation>
        <location evidence="1">Membrane</location>
        <topology evidence="1">Single-pass membrane protein</topology>
    </subcellularLocation>
    <subcellularLocation>
        <location evidence="1">Endoplasmic reticulum membrane</location>
        <topology evidence="1">Single-pass membrane protein</topology>
    </subcellularLocation>
</comment>
<comment type="miscellaneous">
    <text evidence="3">Present with 846 molecules/cell in log phase SD medium.</text>
</comment>
<comment type="similarity">
    <text evidence="4">Belongs to the RAMP4 family.</text>
</comment>
<reference key="1">
    <citation type="journal article" date="1991" name="J. Biochem.">
        <title>Yeast gene which suppresses the defect in protein export of a secY mutant of E. coli.</title>
        <authorList>
            <person name="Sakaguchi M."/>
            <person name="Ueguchi C."/>
            <person name="Ito K."/>
            <person name="Omura T."/>
        </authorList>
    </citation>
    <scope>NUCLEOTIDE SEQUENCE [GENOMIC DNA]</scope>
    <scope>FUNCTION</scope>
    <source>
        <strain>TD-1</strain>
    </source>
</reference>
<reference key="2">
    <citation type="journal article" date="1994" name="EMBO J.">
        <title>Complete DNA sequence of yeast chromosome II.</title>
        <authorList>
            <person name="Feldmann H."/>
            <person name="Aigle M."/>
            <person name="Aljinovic G."/>
            <person name="Andre B."/>
            <person name="Baclet M.C."/>
            <person name="Barthe C."/>
            <person name="Baur A."/>
            <person name="Becam A.-M."/>
            <person name="Biteau N."/>
            <person name="Boles E."/>
            <person name="Brandt T."/>
            <person name="Brendel M."/>
            <person name="Brueckner M."/>
            <person name="Bussereau F."/>
            <person name="Christiansen C."/>
            <person name="Contreras R."/>
            <person name="Crouzet M."/>
            <person name="Cziepluch C."/>
            <person name="Demolis N."/>
            <person name="Delaveau T."/>
            <person name="Doignon F."/>
            <person name="Domdey H."/>
            <person name="Duesterhus S."/>
            <person name="Dubois E."/>
            <person name="Dujon B."/>
            <person name="El Bakkoury M."/>
            <person name="Entian K.-D."/>
            <person name="Feuermann M."/>
            <person name="Fiers W."/>
            <person name="Fobo G.M."/>
            <person name="Fritz C."/>
            <person name="Gassenhuber J."/>
            <person name="Glansdorff N."/>
            <person name="Goffeau A."/>
            <person name="Grivell L.A."/>
            <person name="de Haan M."/>
            <person name="Hein C."/>
            <person name="Herbert C.J."/>
            <person name="Hollenberg C.P."/>
            <person name="Holmstroem K."/>
            <person name="Jacq C."/>
            <person name="Jacquet M."/>
            <person name="Jauniaux J.-C."/>
            <person name="Jonniaux J.-L."/>
            <person name="Kallesoee T."/>
            <person name="Kiesau P."/>
            <person name="Kirchrath L."/>
            <person name="Koetter P."/>
            <person name="Korol S."/>
            <person name="Liebl S."/>
            <person name="Logghe M."/>
            <person name="Lohan A.J.E."/>
            <person name="Louis E.J."/>
            <person name="Li Z.Y."/>
            <person name="Maat M.J."/>
            <person name="Mallet L."/>
            <person name="Mannhaupt G."/>
            <person name="Messenguy F."/>
            <person name="Miosga T."/>
            <person name="Molemans F."/>
            <person name="Mueller S."/>
            <person name="Nasr F."/>
            <person name="Obermaier B."/>
            <person name="Perea J."/>
            <person name="Pierard A."/>
            <person name="Piravandi E."/>
            <person name="Pohl F.M."/>
            <person name="Pohl T.M."/>
            <person name="Potier S."/>
            <person name="Proft M."/>
            <person name="Purnelle B."/>
            <person name="Ramezani Rad M."/>
            <person name="Rieger M."/>
            <person name="Rose M."/>
            <person name="Schaaff-Gerstenschlaeger I."/>
            <person name="Scherens B."/>
            <person name="Schwarzlose C."/>
            <person name="Skala J."/>
            <person name="Slonimski P.P."/>
            <person name="Smits P.H.M."/>
            <person name="Souciet J.-L."/>
            <person name="Steensma H.Y."/>
            <person name="Stucka R."/>
            <person name="Urrestarazu L.A."/>
            <person name="van der Aart Q.J.M."/>
            <person name="Van Dyck L."/>
            <person name="Vassarotti A."/>
            <person name="Vetter I."/>
            <person name="Vierendeels F."/>
            <person name="Vissers S."/>
            <person name="Wagner G."/>
            <person name="de Wergifosse P."/>
            <person name="Wolfe K.H."/>
            <person name="Zagulski M."/>
            <person name="Zimmermann F.K."/>
            <person name="Mewes H.-W."/>
            <person name="Kleine K."/>
        </authorList>
    </citation>
    <scope>NUCLEOTIDE SEQUENCE [LARGE SCALE GENOMIC DNA]</scope>
    <source>
        <strain>ATCC 204508 / S288c</strain>
    </source>
</reference>
<reference key="3">
    <citation type="journal article" date="2014" name="G3 (Bethesda)">
        <title>The reference genome sequence of Saccharomyces cerevisiae: Then and now.</title>
        <authorList>
            <person name="Engel S.R."/>
            <person name="Dietrich F.S."/>
            <person name="Fisk D.G."/>
            <person name="Binkley G."/>
            <person name="Balakrishnan R."/>
            <person name="Costanzo M.C."/>
            <person name="Dwight S.S."/>
            <person name="Hitz B.C."/>
            <person name="Karra K."/>
            <person name="Nash R.S."/>
            <person name="Weng S."/>
            <person name="Wong E.D."/>
            <person name="Lloyd P."/>
            <person name="Skrzypek M.S."/>
            <person name="Miyasato S.R."/>
            <person name="Simison M."/>
            <person name="Cherry J.M."/>
        </authorList>
    </citation>
    <scope>GENOME REANNOTATION</scope>
    <source>
        <strain>ATCC 204508 / S288c</strain>
    </source>
</reference>
<reference key="4">
    <citation type="journal article" date="2007" name="Genome Res.">
        <title>Approaching a complete repository of sequence-verified protein-encoding clones for Saccharomyces cerevisiae.</title>
        <authorList>
            <person name="Hu Y."/>
            <person name="Rolfs A."/>
            <person name="Bhullar B."/>
            <person name="Murthy T.V.S."/>
            <person name="Zhu C."/>
            <person name="Berger M.F."/>
            <person name="Camargo A.A."/>
            <person name="Kelley F."/>
            <person name="McCarron S."/>
            <person name="Jepson D."/>
            <person name="Richardson A."/>
            <person name="Raphael J."/>
            <person name="Moreira D."/>
            <person name="Taycher E."/>
            <person name="Zuo D."/>
            <person name="Mohr S."/>
            <person name="Kane M.F."/>
            <person name="Williamson J."/>
            <person name="Simpson A.J.G."/>
            <person name="Bulyk M.L."/>
            <person name="Harlow E."/>
            <person name="Marsischky G."/>
            <person name="Kolodner R.D."/>
            <person name="LaBaer J."/>
        </authorList>
    </citation>
    <scope>NUCLEOTIDE SEQUENCE [GENOMIC DNA]</scope>
    <source>
        <strain>ATCC 204508 / S288c</strain>
    </source>
</reference>
<reference key="5">
    <citation type="journal article" date="2003" name="Nature">
        <title>Global analysis of protein localization in budding yeast.</title>
        <authorList>
            <person name="Huh W.-K."/>
            <person name="Falvo J.V."/>
            <person name="Gerke L.C."/>
            <person name="Carroll A.S."/>
            <person name="Howson R.W."/>
            <person name="Weissman J.S."/>
            <person name="O'Shea E.K."/>
        </authorList>
    </citation>
    <scope>SUBCELLULAR LOCATION [LARGE SCALE ANALYSIS]</scope>
</reference>
<reference key="6">
    <citation type="journal article" date="2003" name="Nature">
        <title>Global analysis of protein expression in yeast.</title>
        <authorList>
            <person name="Ghaemmaghami S."/>
            <person name="Huh W.-K."/>
            <person name="Bower K."/>
            <person name="Howson R.W."/>
            <person name="Belle A."/>
            <person name="Dephoure N."/>
            <person name="O'Shea E.K."/>
            <person name="Weissman J.S."/>
        </authorList>
    </citation>
    <scope>LEVEL OF PROTEIN EXPRESSION [LARGE SCALE ANALYSIS]</scope>
</reference>
<reference key="7">
    <citation type="journal article" date="2008" name="Cell">
        <title>The GET complex mediates insertion of tail-anchored proteins into the ER membrane.</title>
        <authorList>
            <person name="Schuldiner M."/>
            <person name="Metz J."/>
            <person name="Schmid V."/>
            <person name="Denic V."/>
            <person name="Rakwalska M."/>
            <person name="Schmitt H.D."/>
            <person name="Schwappach B."/>
            <person name="Weissman J.S."/>
        </authorList>
    </citation>
    <scope>SUBCELLULAR LOCATION</scope>
</reference>
<sequence length="65" mass="7365">MAVQTPRQRLANAKFNKNNEKYRKYGKKKEGKTEKTAPVISKTWLGILLFLLVGGGVLQLISYIL</sequence>
<dbReference type="EMBL" id="D00919">
    <property type="protein sequence ID" value="BAA00764.1"/>
    <property type="molecule type" value="Genomic_DNA"/>
</dbReference>
<dbReference type="EMBL" id="Z36031">
    <property type="protein sequence ID" value="CAA85121.1"/>
    <property type="molecule type" value="Genomic_DNA"/>
</dbReference>
<dbReference type="EMBL" id="Z36032">
    <property type="protein sequence ID" value="CAA85124.1"/>
    <property type="molecule type" value="Genomic_DNA"/>
</dbReference>
<dbReference type="EMBL" id="AY558124">
    <property type="protein sequence ID" value="AAS56450.1"/>
    <property type="molecule type" value="Genomic_DNA"/>
</dbReference>
<dbReference type="EMBL" id="BK006936">
    <property type="protein sequence ID" value="DAA07278.1"/>
    <property type="molecule type" value="Genomic_DNA"/>
</dbReference>
<dbReference type="PIR" id="JQ0912">
    <property type="entry name" value="JQ0912"/>
</dbReference>
<dbReference type="RefSeq" id="NP_009721.1">
    <property type="nucleotide sequence ID" value="NM_001180059.1"/>
</dbReference>
<dbReference type="SMR" id="P38374"/>
<dbReference type="BioGRID" id="32862">
    <property type="interactions" value="98"/>
</dbReference>
<dbReference type="DIP" id="DIP-4936N"/>
<dbReference type="FunCoup" id="P38374">
    <property type="interactions" value="54"/>
</dbReference>
<dbReference type="IntAct" id="P38374">
    <property type="interactions" value="5"/>
</dbReference>
<dbReference type="STRING" id="4932.YBR162W-A"/>
<dbReference type="iPTMnet" id="P38374"/>
<dbReference type="PaxDb" id="4932-YBR162W-A"/>
<dbReference type="PeptideAtlas" id="P38374"/>
<dbReference type="EnsemblFungi" id="YBR162W-A_mRNA">
    <property type="protein sequence ID" value="YBR162W-A"/>
    <property type="gene ID" value="YBR162W-A"/>
</dbReference>
<dbReference type="GeneID" id="852460"/>
<dbReference type="KEGG" id="sce:YBR162W-A"/>
<dbReference type="AGR" id="SGD:S000002158"/>
<dbReference type="SGD" id="S000002158">
    <property type="gene designation" value="YSY6"/>
</dbReference>
<dbReference type="VEuPathDB" id="FungiDB:YBR162W-A"/>
<dbReference type="eggNOG" id="ENOG502SDGZ">
    <property type="taxonomic scope" value="Eukaryota"/>
</dbReference>
<dbReference type="HOGENOM" id="CLU_182424_0_1_1"/>
<dbReference type="InParanoid" id="P38374"/>
<dbReference type="OMA" id="ANEKFYK"/>
<dbReference type="BioCyc" id="YEAST:G3O-29230-MONOMER"/>
<dbReference type="Reactome" id="R-SCE-9609523">
    <property type="pathway name" value="Insertion of tail-anchored proteins into the endoplasmic reticulum membrane"/>
</dbReference>
<dbReference type="BioGRID-ORCS" id="852460">
    <property type="hits" value="0 hits in 10 CRISPR screens"/>
</dbReference>
<dbReference type="PRO" id="PR:P38374"/>
<dbReference type="Proteomes" id="UP000002311">
    <property type="component" value="Chromosome II"/>
</dbReference>
<dbReference type="RNAct" id="P38374">
    <property type="molecule type" value="protein"/>
</dbReference>
<dbReference type="GO" id="GO:0005783">
    <property type="term" value="C:endoplasmic reticulum"/>
    <property type="evidence" value="ECO:0007005"/>
    <property type="project" value="SGD"/>
</dbReference>
<dbReference type="GO" id="GO:0005789">
    <property type="term" value="C:endoplasmic reticulum membrane"/>
    <property type="evidence" value="ECO:0007669"/>
    <property type="project" value="UniProtKB-SubCell"/>
</dbReference>
<dbReference type="GO" id="GO:0030968">
    <property type="term" value="P:endoplasmic reticulum unfolded protein response"/>
    <property type="evidence" value="ECO:0000318"/>
    <property type="project" value="GO_Central"/>
</dbReference>
<dbReference type="GO" id="GO:0009306">
    <property type="term" value="P:protein secretion"/>
    <property type="evidence" value="ECO:0000316"/>
    <property type="project" value="SGD"/>
</dbReference>
<dbReference type="InterPro" id="IPR010580">
    <property type="entry name" value="ER_stress-assoc"/>
</dbReference>
<dbReference type="Pfam" id="PF06624">
    <property type="entry name" value="RAMP4"/>
    <property type="match status" value="1"/>
</dbReference>
<proteinExistence type="evidence at protein level"/>
<protein>
    <recommendedName>
        <fullName>Protein YSY6</fullName>
    </recommendedName>
</protein>
<organism>
    <name type="scientific">Saccharomyces cerevisiae (strain ATCC 204508 / S288c)</name>
    <name type="common">Baker's yeast</name>
    <dbReference type="NCBI Taxonomy" id="559292"/>
    <lineage>
        <taxon>Eukaryota</taxon>
        <taxon>Fungi</taxon>
        <taxon>Dikarya</taxon>
        <taxon>Ascomycota</taxon>
        <taxon>Saccharomycotina</taxon>
        <taxon>Saccharomycetes</taxon>
        <taxon>Saccharomycetales</taxon>
        <taxon>Saccharomycetaceae</taxon>
        <taxon>Saccharomyces</taxon>
    </lineage>
</organism>
<keyword id="KW-0256">Endoplasmic reticulum</keyword>
<keyword id="KW-0472">Membrane</keyword>
<keyword id="KW-1185">Reference proteome</keyword>
<keyword id="KW-0812">Transmembrane</keyword>
<keyword id="KW-1133">Transmembrane helix</keyword>
<keyword id="KW-0834">Unfolded protein response</keyword>